<evidence type="ECO:0000255" key="1">
    <source>
        <dbReference type="HAMAP-Rule" id="MF_01576"/>
    </source>
</evidence>
<feature type="chain" id="PRO_1000196765" description="Bifunctional protein FolD">
    <location>
        <begin position="1"/>
        <end position="303"/>
    </location>
</feature>
<feature type="binding site" evidence="1">
    <location>
        <begin position="168"/>
        <end position="170"/>
    </location>
    <ligand>
        <name>NADP(+)</name>
        <dbReference type="ChEBI" id="CHEBI:58349"/>
    </ligand>
</feature>
<feature type="binding site" evidence="1">
    <location>
        <position position="197"/>
    </location>
    <ligand>
        <name>NADP(+)</name>
        <dbReference type="ChEBI" id="CHEBI:58349"/>
    </ligand>
</feature>
<feature type="binding site" evidence="1">
    <location>
        <position position="238"/>
    </location>
    <ligand>
        <name>NADP(+)</name>
        <dbReference type="ChEBI" id="CHEBI:58349"/>
    </ligand>
</feature>
<accession>A8ZTQ4</accession>
<proteinExistence type="inferred from homology"/>
<sequence length="303" mass="32357">MSAKLIKGTEIREEILKEIEAEVKEIKEKHGKVPGLVTILVGESPASISYVTLKIQTAHRVGFKEVQDSQPVDISEADLLALIDKYNKDDSIHGILVQLPLPKHIDEKKVLNAIDPDKDVDGFHPVNVGRLMIGGSEVKFPPCTPAGIQEMIVRAGVETSGAEVVVVGRSNIVGKPIANMMLQKGPGANATVTVVHTRTKNMDEHCKRADILIVAAGVPGLVKPEWIKPGACVIDVGVNRVGEKPSAKDPNKMVAILSGDVDFDAAKEIAGSITPVPGGVGPMTITMLMLNTLKSLKFKLGLI</sequence>
<gene>
    <name evidence="1" type="primary">folD</name>
    <name type="ordered locus">Dole_2033</name>
</gene>
<name>FOLD_DESOH</name>
<reference key="1">
    <citation type="submission" date="2007-10" db="EMBL/GenBank/DDBJ databases">
        <title>Complete sequence of Desulfococcus oleovorans Hxd3.</title>
        <authorList>
            <consortium name="US DOE Joint Genome Institute"/>
            <person name="Copeland A."/>
            <person name="Lucas S."/>
            <person name="Lapidus A."/>
            <person name="Barry K."/>
            <person name="Glavina del Rio T."/>
            <person name="Dalin E."/>
            <person name="Tice H."/>
            <person name="Pitluck S."/>
            <person name="Kiss H."/>
            <person name="Brettin T."/>
            <person name="Bruce D."/>
            <person name="Detter J.C."/>
            <person name="Han C."/>
            <person name="Schmutz J."/>
            <person name="Larimer F."/>
            <person name="Land M."/>
            <person name="Hauser L."/>
            <person name="Kyrpides N."/>
            <person name="Kim E."/>
            <person name="Wawrik B."/>
            <person name="Richardson P."/>
        </authorList>
    </citation>
    <scope>NUCLEOTIDE SEQUENCE [LARGE SCALE GENOMIC DNA]</scope>
    <source>
        <strain>DSM 6200 / JCM 39069 / Hxd3</strain>
    </source>
</reference>
<dbReference type="EC" id="1.5.1.5" evidence="1"/>
<dbReference type="EC" id="3.5.4.9" evidence="1"/>
<dbReference type="EMBL" id="CP000859">
    <property type="protein sequence ID" value="ABW67837.1"/>
    <property type="molecule type" value="Genomic_DNA"/>
</dbReference>
<dbReference type="RefSeq" id="WP_012175449.1">
    <property type="nucleotide sequence ID" value="NC_009943.1"/>
</dbReference>
<dbReference type="SMR" id="A8ZTQ4"/>
<dbReference type="STRING" id="96561.Dole_2033"/>
<dbReference type="KEGG" id="dol:Dole_2033"/>
<dbReference type="eggNOG" id="COG0190">
    <property type="taxonomic scope" value="Bacteria"/>
</dbReference>
<dbReference type="HOGENOM" id="CLU_034045_2_1_7"/>
<dbReference type="OrthoDB" id="9803580at2"/>
<dbReference type="UniPathway" id="UPA00193"/>
<dbReference type="Proteomes" id="UP000008561">
    <property type="component" value="Chromosome"/>
</dbReference>
<dbReference type="GO" id="GO:0005829">
    <property type="term" value="C:cytosol"/>
    <property type="evidence" value="ECO:0007669"/>
    <property type="project" value="TreeGrafter"/>
</dbReference>
<dbReference type="GO" id="GO:0004477">
    <property type="term" value="F:methenyltetrahydrofolate cyclohydrolase activity"/>
    <property type="evidence" value="ECO:0007669"/>
    <property type="project" value="UniProtKB-UniRule"/>
</dbReference>
<dbReference type="GO" id="GO:0004488">
    <property type="term" value="F:methylenetetrahydrofolate dehydrogenase (NADP+) activity"/>
    <property type="evidence" value="ECO:0007669"/>
    <property type="project" value="UniProtKB-UniRule"/>
</dbReference>
<dbReference type="GO" id="GO:0000105">
    <property type="term" value="P:L-histidine biosynthetic process"/>
    <property type="evidence" value="ECO:0007669"/>
    <property type="project" value="UniProtKB-KW"/>
</dbReference>
<dbReference type="GO" id="GO:0009086">
    <property type="term" value="P:methionine biosynthetic process"/>
    <property type="evidence" value="ECO:0007669"/>
    <property type="project" value="UniProtKB-KW"/>
</dbReference>
<dbReference type="GO" id="GO:0006164">
    <property type="term" value="P:purine nucleotide biosynthetic process"/>
    <property type="evidence" value="ECO:0007669"/>
    <property type="project" value="UniProtKB-KW"/>
</dbReference>
<dbReference type="GO" id="GO:0035999">
    <property type="term" value="P:tetrahydrofolate interconversion"/>
    <property type="evidence" value="ECO:0007669"/>
    <property type="project" value="UniProtKB-UniRule"/>
</dbReference>
<dbReference type="CDD" id="cd01080">
    <property type="entry name" value="NAD_bind_m-THF_DH_Cyclohyd"/>
    <property type="match status" value="1"/>
</dbReference>
<dbReference type="FunFam" id="3.40.50.720:FF:000006">
    <property type="entry name" value="Bifunctional protein FolD"/>
    <property type="match status" value="1"/>
</dbReference>
<dbReference type="FunFam" id="3.40.50.10860:FF:000005">
    <property type="entry name" value="C-1-tetrahydrofolate synthase, cytoplasmic, putative"/>
    <property type="match status" value="1"/>
</dbReference>
<dbReference type="Gene3D" id="3.40.50.10860">
    <property type="entry name" value="Leucine Dehydrogenase, chain A, domain 1"/>
    <property type="match status" value="1"/>
</dbReference>
<dbReference type="Gene3D" id="3.40.50.720">
    <property type="entry name" value="NAD(P)-binding Rossmann-like Domain"/>
    <property type="match status" value="1"/>
</dbReference>
<dbReference type="HAMAP" id="MF_01576">
    <property type="entry name" value="THF_DHG_CYH"/>
    <property type="match status" value="1"/>
</dbReference>
<dbReference type="InterPro" id="IPR046346">
    <property type="entry name" value="Aminoacid_DH-like_N_sf"/>
</dbReference>
<dbReference type="InterPro" id="IPR036291">
    <property type="entry name" value="NAD(P)-bd_dom_sf"/>
</dbReference>
<dbReference type="InterPro" id="IPR000672">
    <property type="entry name" value="THF_DH/CycHdrlase"/>
</dbReference>
<dbReference type="InterPro" id="IPR020630">
    <property type="entry name" value="THF_DH/CycHdrlase_cat_dom"/>
</dbReference>
<dbReference type="InterPro" id="IPR020867">
    <property type="entry name" value="THF_DH/CycHdrlase_CS"/>
</dbReference>
<dbReference type="InterPro" id="IPR020631">
    <property type="entry name" value="THF_DH/CycHdrlase_NAD-bd_dom"/>
</dbReference>
<dbReference type="NCBIfam" id="NF010765">
    <property type="entry name" value="PRK14168.1"/>
    <property type="match status" value="1"/>
</dbReference>
<dbReference type="PANTHER" id="PTHR48099:SF5">
    <property type="entry name" value="C-1-TETRAHYDROFOLATE SYNTHASE, CYTOPLASMIC"/>
    <property type="match status" value="1"/>
</dbReference>
<dbReference type="PANTHER" id="PTHR48099">
    <property type="entry name" value="C-1-TETRAHYDROFOLATE SYNTHASE, CYTOPLASMIC-RELATED"/>
    <property type="match status" value="1"/>
</dbReference>
<dbReference type="Pfam" id="PF00763">
    <property type="entry name" value="THF_DHG_CYH"/>
    <property type="match status" value="1"/>
</dbReference>
<dbReference type="Pfam" id="PF02882">
    <property type="entry name" value="THF_DHG_CYH_C"/>
    <property type="match status" value="1"/>
</dbReference>
<dbReference type="PRINTS" id="PR00085">
    <property type="entry name" value="THFDHDRGNASE"/>
</dbReference>
<dbReference type="SUPFAM" id="SSF53223">
    <property type="entry name" value="Aminoacid dehydrogenase-like, N-terminal domain"/>
    <property type="match status" value="1"/>
</dbReference>
<dbReference type="SUPFAM" id="SSF51735">
    <property type="entry name" value="NAD(P)-binding Rossmann-fold domains"/>
    <property type="match status" value="1"/>
</dbReference>
<dbReference type="PROSITE" id="PS00766">
    <property type="entry name" value="THF_DHG_CYH_1"/>
    <property type="match status" value="1"/>
</dbReference>
<dbReference type="PROSITE" id="PS00767">
    <property type="entry name" value="THF_DHG_CYH_2"/>
    <property type="match status" value="1"/>
</dbReference>
<organism>
    <name type="scientific">Desulfosudis oleivorans (strain DSM 6200 / JCM 39069 / Hxd3)</name>
    <name type="common">Desulfococcus oleovorans</name>
    <dbReference type="NCBI Taxonomy" id="96561"/>
    <lineage>
        <taxon>Bacteria</taxon>
        <taxon>Pseudomonadati</taxon>
        <taxon>Thermodesulfobacteriota</taxon>
        <taxon>Desulfobacteria</taxon>
        <taxon>Desulfobacterales</taxon>
        <taxon>Desulfosudaceae</taxon>
        <taxon>Desulfosudis</taxon>
    </lineage>
</organism>
<keyword id="KW-0028">Amino-acid biosynthesis</keyword>
<keyword id="KW-0368">Histidine biosynthesis</keyword>
<keyword id="KW-0378">Hydrolase</keyword>
<keyword id="KW-0486">Methionine biosynthesis</keyword>
<keyword id="KW-0511">Multifunctional enzyme</keyword>
<keyword id="KW-0521">NADP</keyword>
<keyword id="KW-0554">One-carbon metabolism</keyword>
<keyword id="KW-0560">Oxidoreductase</keyword>
<keyword id="KW-0658">Purine biosynthesis</keyword>
<keyword id="KW-1185">Reference proteome</keyword>
<comment type="function">
    <text evidence="1">Catalyzes the oxidation of 5,10-methylenetetrahydrofolate to 5,10-methenyltetrahydrofolate and then the hydrolysis of 5,10-methenyltetrahydrofolate to 10-formyltetrahydrofolate.</text>
</comment>
<comment type="catalytic activity">
    <reaction evidence="1">
        <text>(6R)-5,10-methylene-5,6,7,8-tetrahydrofolate + NADP(+) = (6R)-5,10-methenyltetrahydrofolate + NADPH</text>
        <dbReference type="Rhea" id="RHEA:22812"/>
        <dbReference type="ChEBI" id="CHEBI:15636"/>
        <dbReference type="ChEBI" id="CHEBI:57455"/>
        <dbReference type="ChEBI" id="CHEBI:57783"/>
        <dbReference type="ChEBI" id="CHEBI:58349"/>
        <dbReference type="EC" id="1.5.1.5"/>
    </reaction>
</comment>
<comment type="catalytic activity">
    <reaction evidence="1">
        <text>(6R)-5,10-methenyltetrahydrofolate + H2O = (6R)-10-formyltetrahydrofolate + H(+)</text>
        <dbReference type="Rhea" id="RHEA:23700"/>
        <dbReference type="ChEBI" id="CHEBI:15377"/>
        <dbReference type="ChEBI" id="CHEBI:15378"/>
        <dbReference type="ChEBI" id="CHEBI:57455"/>
        <dbReference type="ChEBI" id="CHEBI:195366"/>
        <dbReference type="EC" id="3.5.4.9"/>
    </reaction>
</comment>
<comment type="pathway">
    <text evidence="1">One-carbon metabolism; tetrahydrofolate interconversion.</text>
</comment>
<comment type="subunit">
    <text evidence="1">Homodimer.</text>
</comment>
<comment type="similarity">
    <text evidence="1">Belongs to the tetrahydrofolate dehydrogenase/cyclohydrolase family.</text>
</comment>
<protein>
    <recommendedName>
        <fullName evidence="1">Bifunctional protein FolD</fullName>
    </recommendedName>
    <domain>
        <recommendedName>
            <fullName evidence="1">Methylenetetrahydrofolate dehydrogenase</fullName>
            <ecNumber evidence="1">1.5.1.5</ecNumber>
        </recommendedName>
    </domain>
    <domain>
        <recommendedName>
            <fullName evidence="1">Methenyltetrahydrofolate cyclohydrolase</fullName>
            <ecNumber evidence="1">3.5.4.9</ecNumber>
        </recommendedName>
    </domain>
</protein>